<accession>Q48VG9</accession>
<evidence type="ECO:0000255" key="1">
    <source>
        <dbReference type="HAMAP-Rule" id="MF_00168"/>
    </source>
</evidence>
<organism>
    <name type="scientific">Streptococcus pyogenes serotype M28 (strain MGAS6180)</name>
    <dbReference type="NCBI Taxonomy" id="319701"/>
    <lineage>
        <taxon>Bacteria</taxon>
        <taxon>Bacillati</taxon>
        <taxon>Bacillota</taxon>
        <taxon>Bacilli</taxon>
        <taxon>Lactobacillales</taxon>
        <taxon>Streptococcaceae</taxon>
        <taxon>Streptococcus</taxon>
    </lineage>
</organism>
<proteinExistence type="inferred from homology"/>
<comment type="function">
    <text evidence="1">Catalyzes the base-exchange of a guanine (G) residue with the queuine precursor 7-aminomethyl-7-deazaguanine (PreQ1) at position 34 (anticodon wobble position) in tRNAs with GU(N) anticodons (tRNA-Asp, -Asn, -His and -Tyr). Catalysis occurs through a double-displacement mechanism. The nucleophile active site attacks the C1' of nucleotide 34 to detach the guanine base from the RNA, forming a covalent enzyme-RNA intermediate. The proton acceptor active site deprotonates the incoming PreQ1, allowing a nucleophilic attack on the C1' of the ribose to form the product. After dissociation, two additional enzymatic reactions on the tRNA convert PreQ1 to queuine (Q), resulting in the hypermodified nucleoside queuosine (7-(((4,5-cis-dihydroxy-2-cyclopenten-1-yl)amino)methyl)-7-deazaguanosine).</text>
</comment>
<comment type="catalytic activity">
    <reaction evidence="1">
        <text>7-aminomethyl-7-carbaguanine + guanosine(34) in tRNA = 7-aminomethyl-7-carbaguanosine(34) in tRNA + guanine</text>
        <dbReference type="Rhea" id="RHEA:24104"/>
        <dbReference type="Rhea" id="RHEA-COMP:10341"/>
        <dbReference type="Rhea" id="RHEA-COMP:10342"/>
        <dbReference type="ChEBI" id="CHEBI:16235"/>
        <dbReference type="ChEBI" id="CHEBI:58703"/>
        <dbReference type="ChEBI" id="CHEBI:74269"/>
        <dbReference type="ChEBI" id="CHEBI:82833"/>
        <dbReference type="EC" id="2.4.2.29"/>
    </reaction>
</comment>
<comment type="cofactor">
    <cofactor evidence="1">
        <name>Zn(2+)</name>
        <dbReference type="ChEBI" id="CHEBI:29105"/>
    </cofactor>
    <text evidence="1">Binds 1 zinc ion per subunit.</text>
</comment>
<comment type="pathway">
    <text evidence="1">tRNA modification; tRNA-queuosine biosynthesis.</text>
</comment>
<comment type="subunit">
    <text evidence="1">Homodimer. Within each dimer, one monomer is responsible for RNA recognition and catalysis, while the other monomer binds to the replacement base PreQ1.</text>
</comment>
<comment type="similarity">
    <text evidence="1">Belongs to the queuine tRNA-ribosyltransferase family.</text>
</comment>
<name>TGT_STRPM</name>
<reference key="1">
    <citation type="journal article" date="2005" name="J. Infect. Dis.">
        <title>Genome sequence of a serotype M28 strain of group A Streptococcus: potential new insights into puerperal sepsis and bacterial disease specificity.</title>
        <authorList>
            <person name="Green N.M."/>
            <person name="Zhang S."/>
            <person name="Porcella S.F."/>
            <person name="Nagiec M.J."/>
            <person name="Barbian K.D."/>
            <person name="Beres S.B."/>
            <person name="Lefebvre R.B."/>
            <person name="Musser J.M."/>
        </authorList>
    </citation>
    <scope>NUCLEOTIDE SEQUENCE [LARGE SCALE GENOMIC DNA]</scope>
    <source>
        <strain>MGAS6180</strain>
    </source>
</reference>
<feature type="chain" id="PRO_1000016873" description="Queuine tRNA-ribosyltransferase">
    <location>
        <begin position="1"/>
        <end position="380"/>
    </location>
</feature>
<feature type="region of interest" description="RNA binding" evidence="1">
    <location>
        <begin position="251"/>
        <end position="257"/>
    </location>
</feature>
<feature type="region of interest" description="RNA binding; important for wobble base 34 recognition" evidence="1">
    <location>
        <begin position="275"/>
        <end position="279"/>
    </location>
</feature>
<feature type="active site" description="Proton acceptor" evidence="1">
    <location>
        <position position="96"/>
    </location>
</feature>
<feature type="active site" description="Nucleophile" evidence="1">
    <location>
        <position position="270"/>
    </location>
</feature>
<feature type="binding site" evidence="1">
    <location>
        <begin position="96"/>
        <end position="100"/>
    </location>
    <ligand>
        <name>substrate</name>
    </ligand>
</feature>
<feature type="binding site" evidence="1">
    <location>
        <position position="150"/>
    </location>
    <ligand>
        <name>substrate</name>
    </ligand>
</feature>
<feature type="binding site" evidence="1">
    <location>
        <position position="193"/>
    </location>
    <ligand>
        <name>substrate</name>
    </ligand>
</feature>
<feature type="binding site" evidence="1">
    <location>
        <position position="220"/>
    </location>
    <ligand>
        <name>substrate</name>
    </ligand>
</feature>
<feature type="binding site" evidence="1">
    <location>
        <position position="308"/>
    </location>
    <ligand>
        <name>Zn(2+)</name>
        <dbReference type="ChEBI" id="CHEBI:29105"/>
    </ligand>
</feature>
<feature type="binding site" evidence="1">
    <location>
        <position position="310"/>
    </location>
    <ligand>
        <name>Zn(2+)</name>
        <dbReference type="ChEBI" id="CHEBI:29105"/>
    </ligand>
</feature>
<feature type="binding site" evidence="1">
    <location>
        <position position="313"/>
    </location>
    <ligand>
        <name>Zn(2+)</name>
        <dbReference type="ChEBI" id="CHEBI:29105"/>
    </ligand>
</feature>
<feature type="binding site" evidence="1">
    <location>
        <position position="339"/>
    </location>
    <ligand>
        <name>Zn(2+)</name>
        <dbReference type="ChEBI" id="CHEBI:29105"/>
    </ligand>
</feature>
<keyword id="KW-0328">Glycosyltransferase</keyword>
<keyword id="KW-0479">Metal-binding</keyword>
<keyword id="KW-0671">Queuosine biosynthesis</keyword>
<keyword id="KW-0808">Transferase</keyword>
<keyword id="KW-0819">tRNA processing</keyword>
<keyword id="KW-0862">Zinc</keyword>
<protein>
    <recommendedName>
        <fullName evidence="1">Queuine tRNA-ribosyltransferase</fullName>
        <ecNumber evidence="1">2.4.2.29</ecNumber>
    </recommendedName>
    <alternativeName>
        <fullName evidence="1">Guanine insertion enzyme</fullName>
    </alternativeName>
    <alternativeName>
        <fullName evidence="1">tRNA-guanine transglycosylase</fullName>
    </alternativeName>
</protein>
<dbReference type="EC" id="2.4.2.29" evidence="1"/>
<dbReference type="EMBL" id="CP000056">
    <property type="protein sequence ID" value="AAX71287.1"/>
    <property type="molecule type" value="Genomic_DNA"/>
</dbReference>
<dbReference type="RefSeq" id="WP_002986319.1">
    <property type="nucleotide sequence ID" value="NC_007296.2"/>
</dbReference>
<dbReference type="SMR" id="Q48VG9"/>
<dbReference type="GeneID" id="69900150"/>
<dbReference type="KEGG" id="spb:M28_Spy0173"/>
<dbReference type="HOGENOM" id="CLU_022060_0_1_9"/>
<dbReference type="UniPathway" id="UPA00392"/>
<dbReference type="GO" id="GO:0005829">
    <property type="term" value="C:cytosol"/>
    <property type="evidence" value="ECO:0007669"/>
    <property type="project" value="TreeGrafter"/>
</dbReference>
<dbReference type="GO" id="GO:0046872">
    <property type="term" value="F:metal ion binding"/>
    <property type="evidence" value="ECO:0007669"/>
    <property type="project" value="UniProtKB-KW"/>
</dbReference>
<dbReference type="GO" id="GO:0008479">
    <property type="term" value="F:tRNA-guanosine(34) queuine transglycosylase activity"/>
    <property type="evidence" value="ECO:0007669"/>
    <property type="project" value="UniProtKB-UniRule"/>
</dbReference>
<dbReference type="GO" id="GO:0008616">
    <property type="term" value="P:queuosine biosynthetic process"/>
    <property type="evidence" value="ECO:0007669"/>
    <property type="project" value="UniProtKB-UniRule"/>
</dbReference>
<dbReference type="GO" id="GO:0002099">
    <property type="term" value="P:tRNA wobble guanine modification"/>
    <property type="evidence" value="ECO:0007669"/>
    <property type="project" value="TreeGrafter"/>
</dbReference>
<dbReference type="GO" id="GO:0101030">
    <property type="term" value="P:tRNA-guanine transglycosylation"/>
    <property type="evidence" value="ECO:0007669"/>
    <property type="project" value="InterPro"/>
</dbReference>
<dbReference type="FunFam" id="3.20.20.105:FF:000001">
    <property type="entry name" value="Queuine tRNA-ribosyltransferase"/>
    <property type="match status" value="1"/>
</dbReference>
<dbReference type="Gene3D" id="3.20.20.105">
    <property type="entry name" value="Queuine tRNA-ribosyltransferase-like"/>
    <property type="match status" value="1"/>
</dbReference>
<dbReference type="HAMAP" id="MF_00168">
    <property type="entry name" value="Q_tRNA_Tgt"/>
    <property type="match status" value="1"/>
</dbReference>
<dbReference type="InterPro" id="IPR050076">
    <property type="entry name" value="ArchSynthase1/Queuine_TRR"/>
</dbReference>
<dbReference type="InterPro" id="IPR004803">
    <property type="entry name" value="TGT"/>
</dbReference>
<dbReference type="InterPro" id="IPR036511">
    <property type="entry name" value="TGT-like_sf"/>
</dbReference>
<dbReference type="InterPro" id="IPR002616">
    <property type="entry name" value="tRNA_ribo_trans-like"/>
</dbReference>
<dbReference type="NCBIfam" id="TIGR00430">
    <property type="entry name" value="Q_tRNA_tgt"/>
    <property type="match status" value="1"/>
</dbReference>
<dbReference type="NCBIfam" id="TIGR00449">
    <property type="entry name" value="tgt_general"/>
    <property type="match status" value="1"/>
</dbReference>
<dbReference type="PANTHER" id="PTHR46499">
    <property type="entry name" value="QUEUINE TRNA-RIBOSYLTRANSFERASE"/>
    <property type="match status" value="1"/>
</dbReference>
<dbReference type="PANTHER" id="PTHR46499:SF1">
    <property type="entry name" value="QUEUINE TRNA-RIBOSYLTRANSFERASE"/>
    <property type="match status" value="1"/>
</dbReference>
<dbReference type="Pfam" id="PF01702">
    <property type="entry name" value="TGT"/>
    <property type="match status" value="1"/>
</dbReference>
<dbReference type="SUPFAM" id="SSF51713">
    <property type="entry name" value="tRNA-guanine transglycosylase"/>
    <property type="match status" value="1"/>
</dbReference>
<gene>
    <name evidence="1" type="primary">tgt</name>
    <name type="ordered locus">M28_Spy0173</name>
</gene>
<sequence>MTDYPIKYRLIKTEKHTGARLGEIITPHGTFPTPMFMPVGTQATVKTQSPEELKAIGSGIILSNTYHLWLRPGDELIARSGGLHKFMNWDQPILTDSGGFQVYSLADSRNITEEGVTFKNHLNGSKMFLSPEKAISIQNNLGSDIMMSFDECPQFYQPYDYVKKSIERTSRWAERGLKAHRRPHDQGLFGIVQGAGFEDLRRQSAADLVAMDFPGYSIGGLAVGESHEEMNAVLDFTTPLLPENKPRYLMGVGAPDSLIDGVIRGVDMFDCVLPTRIARNGTCMTSEGRLVIKNAKFAEDFTPLDHDCDCYTCQNYSRAYIRHLLKADETFGIRLTSYHNLYFLVNLMKKVRQAIMDDNLLEFRQDFLERYGYNKSNRNF</sequence>